<dbReference type="EMBL" id="CR382128">
    <property type="protein sequence ID" value="CAG83094.1"/>
    <property type="molecule type" value="Genomic_DNA"/>
</dbReference>
<dbReference type="RefSeq" id="XP_500843.1">
    <property type="nucleotide sequence ID" value="XM_500843.1"/>
</dbReference>
<dbReference type="SMR" id="Q6CER9"/>
<dbReference type="STRING" id="284591.Q6CER9"/>
<dbReference type="EnsemblFungi" id="CAG83094">
    <property type="protein sequence ID" value="CAG83094"/>
    <property type="gene ID" value="YALI0_B13508g"/>
</dbReference>
<dbReference type="KEGG" id="yli:2907440"/>
<dbReference type="VEuPathDB" id="FungiDB:YALI0_B13508g"/>
<dbReference type="HOGENOM" id="CLU_078295_3_3_1"/>
<dbReference type="InParanoid" id="Q6CER9"/>
<dbReference type="OMA" id="VHLFEDC"/>
<dbReference type="OrthoDB" id="122251at4891"/>
<dbReference type="Proteomes" id="UP000001300">
    <property type="component" value="Chromosome B"/>
</dbReference>
<dbReference type="GO" id="GO:0005729">
    <property type="term" value="C:2-micrometer circle DNA"/>
    <property type="evidence" value="ECO:0007669"/>
    <property type="project" value="EnsemblFungi"/>
</dbReference>
<dbReference type="GO" id="GO:0043505">
    <property type="term" value="C:CENP-A containing nucleosome"/>
    <property type="evidence" value="ECO:0007669"/>
    <property type="project" value="EnsemblFungi"/>
</dbReference>
<dbReference type="GO" id="GO:0000776">
    <property type="term" value="C:kinetochore"/>
    <property type="evidence" value="ECO:0007669"/>
    <property type="project" value="EnsemblFungi"/>
</dbReference>
<dbReference type="GO" id="GO:0005634">
    <property type="term" value="C:nucleus"/>
    <property type="evidence" value="ECO:0000318"/>
    <property type="project" value="GO_Central"/>
</dbReference>
<dbReference type="GO" id="GO:0005777">
    <property type="term" value="C:peroxisome"/>
    <property type="evidence" value="ECO:0007669"/>
    <property type="project" value="EnsemblFungi"/>
</dbReference>
<dbReference type="GO" id="GO:0019237">
    <property type="term" value="F:centromeric DNA binding"/>
    <property type="evidence" value="ECO:0007669"/>
    <property type="project" value="EnsemblFungi"/>
</dbReference>
<dbReference type="GO" id="GO:0046982">
    <property type="term" value="F:protein heterodimerization activity"/>
    <property type="evidence" value="ECO:0007669"/>
    <property type="project" value="InterPro"/>
</dbReference>
<dbReference type="GO" id="GO:0030527">
    <property type="term" value="F:structural constituent of chromatin"/>
    <property type="evidence" value="ECO:0007669"/>
    <property type="project" value="InterPro"/>
</dbReference>
<dbReference type="GO" id="GO:0030543">
    <property type="term" value="P:2-micrometer plasmid partitioning"/>
    <property type="evidence" value="ECO:0007669"/>
    <property type="project" value="EnsemblFungi"/>
</dbReference>
<dbReference type="GO" id="GO:0051382">
    <property type="term" value="P:kinetochore assembly"/>
    <property type="evidence" value="ECO:0007669"/>
    <property type="project" value="EnsemblFungi"/>
</dbReference>
<dbReference type="GO" id="GO:0000070">
    <property type="term" value="P:mitotic sister chromatid segregation"/>
    <property type="evidence" value="ECO:0007669"/>
    <property type="project" value="EnsemblFungi"/>
</dbReference>
<dbReference type="GO" id="GO:0061644">
    <property type="term" value="P:protein localization to CENP-A containing chromatin"/>
    <property type="evidence" value="ECO:0007669"/>
    <property type="project" value="EnsemblFungi"/>
</dbReference>
<dbReference type="CDD" id="cd22911">
    <property type="entry name" value="HFD_H3"/>
    <property type="match status" value="1"/>
</dbReference>
<dbReference type="FunFam" id="1.10.20.10:FF:000087">
    <property type="entry name" value="Probable histone 3"/>
    <property type="match status" value="1"/>
</dbReference>
<dbReference type="Gene3D" id="1.10.20.10">
    <property type="entry name" value="Histone, subunit A"/>
    <property type="match status" value="1"/>
</dbReference>
<dbReference type="InterPro" id="IPR009072">
    <property type="entry name" value="Histone-fold"/>
</dbReference>
<dbReference type="InterPro" id="IPR007125">
    <property type="entry name" value="Histone_H2A/H2B/H3"/>
</dbReference>
<dbReference type="InterPro" id="IPR000164">
    <property type="entry name" value="Histone_H3/CENP-A"/>
</dbReference>
<dbReference type="PANTHER" id="PTHR45810:SF1">
    <property type="entry name" value="HISTONE H3-LIKE CENTROMERIC PROTEIN A"/>
    <property type="match status" value="1"/>
</dbReference>
<dbReference type="PANTHER" id="PTHR45810">
    <property type="entry name" value="HISTONE H3.2"/>
    <property type="match status" value="1"/>
</dbReference>
<dbReference type="Pfam" id="PF00125">
    <property type="entry name" value="Histone"/>
    <property type="match status" value="1"/>
</dbReference>
<dbReference type="PRINTS" id="PR00622">
    <property type="entry name" value="HISTONEH3"/>
</dbReference>
<dbReference type="SMART" id="SM00428">
    <property type="entry name" value="H3"/>
    <property type="match status" value="1"/>
</dbReference>
<dbReference type="SUPFAM" id="SSF47113">
    <property type="entry name" value="Histone-fold"/>
    <property type="match status" value="1"/>
</dbReference>
<proteinExistence type="inferred from homology"/>
<name>CENPA_YARLI</name>
<protein>
    <recommendedName>
        <fullName>Histone H3-like centromeric protein CSE4</fullName>
    </recommendedName>
    <alternativeName>
        <fullName>CENP-A homolog</fullName>
    </alternativeName>
    <alternativeName>
        <fullName evidence="3">CENPA homolog</fullName>
    </alternativeName>
</protein>
<reference key="1">
    <citation type="journal article" date="2004" name="Nature">
        <title>Genome evolution in yeasts.</title>
        <authorList>
            <person name="Dujon B."/>
            <person name="Sherman D."/>
            <person name="Fischer G."/>
            <person name="Durrens P."/>
            <person name="Casaregola S."/>
            <person name="Lafontaine I."/>
            <person name="de Montigny J."/>
            <person name="Marck C."/>
            <person name="Neuveglise C."/>
            <person name="Talla E."/>
            <person name="Goffard N."/>
            <person name="Frangeul L."/>
            <person name="Aigle M."/>
            <person name="Anthouard V."/>
            <person name="Babour A."/>
            <person name="Barbe V."/>
            <person name="Barnay S."/>
            <person name="Blanchin S."/>
            <person name="Beckerich J.-M."/>
            <person name="Beyne E."/>
            <person name="Bleykasten C."/>
            <person name="Boisrame A."/>
            <person name="Boyer J."/>
            <person name="Cattolico L."/>
            <person name="Confanioleri F."/>
            <person name="de Daruvar A."/>
            <person name="Despons L."/>
            <person name="Fabre E."/>
            <person name="Fairhead C."/>
            <person name="Ferry-Dumazet H."/>
            <person name="Groppi A."/>
            <person name="Hantraye F."/>
            <person name="Hennequin C."/>
            <person name="Jauniaux N."/>
            <person name="Joyet P."/>
            <person name="Kachouri R."/>
            <person name="Kerrest A."/>
            <person name="Koszul R."/>
            <person name="Lemaire M."/>
            <person name="Lesur I."/>
            <person name="Ma L."/>
            <person name="Muller H."/>
            <person name="Nicaud J.-M."/>
            <person name="Nikolski M."/>
            <person name="Oztas S."/>
            <person name="Ozier-Kalogeropoulos O."/>
            <person name="Pellenz S."/>
            <person name="Potier S."/>
            <person name="Richard G.-F."/>
            <person name="Straub M.-L."/>
            <person name="Suleau A."/>
            <person name="Swennen D."/>
            <person name="Tekaia F."/>
            <person name="Wesolowski-Louvel M."/>
            <person name="Westhof E."/>
            <person name="Wirth B."/>
            <person name="Zeniou-Meyer M."/>
            <person name="Zivanovic Y."/>
            <person name="Bolotin-Fukuhara M."/>
            <person name="Thierry A."/>
            <person name="Bouchier C."/>
            <person name="Caudron B."/>
            <person name="Scarpelli C."/>
            <person name="Gaillardin C."/>
            <person name="Weissenbach J."/>
            <person name="Wincker P."/>
            <person name="Souciet J.-L."/>
        </authorList>
    </citation>
    <scope>NUCLEOTIDE SEQUENCE [LARGE SCALE GENOMIC DNA]</scope>
    <source>
        <strain>CLIB 122 / E 150</strain>
    </source>
</reference>
<sequence>MARISLASSSAGVAGKPRGGGGLHPLGQTRKTLPGERRDTTQKITKPRYKPGQKALKEIRRYQRGTELLIAKLPFARVVREVALNYLGSEYGNLQWQSMALLALQEAAEAFLVHLFEDVNLCAIHAKRVTIMQKDMQLARRIRGAWGGAG</sequence>
<feature type="chain" id="PRO_0000297756" description="Histone H3-like centromeric protein CSE4">
    <location>
        <begin position="1"/>
        <end position="150"/>
    </location>
</feature>
<feature type="region of interest" description="Disordered" evidence="2">
    <location>
        <begin position="1"/>
        <end position="50"/>
    </location>
</feature>
<feature type="region of interest" description="H3-like">
    <location>
        <begin position="32"/>
        <end position="145"/>
    </location>
</feature>
<feature type="compositionally biased region" description="Polar residues" evidence="2">
    <location>
        <begin position="1"/>
        <end position="11"/>
    </location>
</feature>
<keyword id="KW-0137">Centromere</keyword>
<keyword id="KW-0158">Chromosome</keyword>
<keyword id="KW-0238">DNA-binding</keyword>
<keyword id="KW-0544">Nucleosome core</keyword>
<keyword id="KW-0539">Nucleus</keyword>
<keyword id="KW-1185">Reference proteome</keyword>
<keyword id="KW-0832">Ubl conjugation</keyword>
<organism>
    <name type="scientific">Yarrowia lipolytica (strain CLIB 122 / E 150)</name>
    <name type="common">Yeast</name>
    <name type="synonym">Candida lipolytica</name>
    <dbReference type="NCBI Taxonomy" id="284591"/>
    <lineage>
        <taxon>Eukaryota</taxon>
        <taxon>Fungi</taxon>
        <taxon>Dikarya</taxon>
        <taxon>Ascomycota</taxon>
        <taxon>Saccharomycotina</taxon>
        <taxon>Dipodascomycetes</taxon>
        <taxon>Dipodascales</taxon>
        <taxon>Dipodascales incertae sedis</taxon>
        <taxon>Yarrowia</taxon>
    </lineage>
</organism>
<gene>
    <name type="primary">CSE4</name>
    <name type="ordered locus">YALI0B13508g</name>
</gene>
<accession>Q6CER9</accession>
<evidence type="ECO:0000250" key="1">
    <source>
        <dbReference type="UniProtKB" id="P36012"/>
    </source>
</evidence>
<evidence type="ECO:0000256" key="2">
    <source>
        <dbReference type="SAM" id="MobiDB-lite"/>
    </source>
</evidence>
<evidence type="ECO:0000305" key="3"/>
<comment type="function">
    <text evidence="1">Histone H3-like nucleosomal protein that is specifically found in centromeric nucleosomes. Replaces conventional H3 in the nucleosome core of centromeric chromatin that serves as an assembly site for the inner kinetochore. Required for recruitment and assembly of kinetochore proteins, mitotic progression and chromosome segregation. May serve as an epigenetic mark that propagates centromere identity through replication and cell division (By similarity).</text>
</comment>
<comment type="subunit">
    <text evidence="1">Component of centromeric nucleosomes, where DNA is wrapped around a histone octamer core. The octamer contains two molecules each of H2A, H2B, CSE4/CENPA and H4 assembled in one CSE4-H4 heterotetramer and two H2A-H2B heterodimers. Interacts with the inner kinetochore.</text>
</comment>
<comment type="subcellular location">
    <subcellularLocation>
        <location evidence="1">Nucleus</location>
    </subcellularLocation>
    <subcellularLocation>
        <location evidence="1">Chromosome</location>
        <location evidence="1">Centromere</location>
    </subcellularLocation>
</comment>
<comment type="PTM">
    <text evidence="1">Ubiquitinated. Is degraded through ubiquitin-mediated proteolysis when not protected by its association to the kinetochore.</text>
</comment>
<comment type="similarity">
    <text evidence="3">Belongs to the histone H3 family.</text>
</comment>